<gene>
    <name type="primary">MT-CYB</name>
    <name type="synonym">COB</name>
    <name type="synonym">CYTB</name>
    <name type="synonym">MTCYB</name>
</gene>
<accession>Q9T9A8</accession>
<dbReference type="EMBL" id="AF036286">
    <property type="protein sequence ID" value="AAD51437.1"/>
    <property type="molecule type" value="Genomic_DNA"/>
</dbReference>
<dbReference type="RefSeq" id="YP_007626484.1">
    <property type="nucleotide sequence ID" value="NC_020732.1"/>
</dbReference>
<dbReference type="SMR" id="Q9T9A8"/>
<dbReference type="GeneID" id="14842363"/>
<dbReference type="CTD" id="4519"/>
<dbReference type="GO" id="GO:0005743">
    <property type="term" value="C:mitochondrial inner membrane"/>
    <property type="evidence" value="ECO:0007669"/>
    <property type="project" value="UniProtKB-SubCell"/>
</dbReference>
<dbReference type="GO" id="GO:0045275">
    <property type="term" value="C:respiratory chain complex III"/>
    <property type="evidence" value="ECO:0007669"/>
    <property type="project" value="InterPro"/>
</dbReference>
<dbReference type="GO" id="GO:0046872">
    <property type="term" value="F:metal ion binding"/>
    <property type="evidence" value="ECO:0007669"/>
    <property type="project" value="UniProtKB-KW"/>
</dbReference>
<dbReference type="GO" id="GO:0008121">
    <property type="term" value="F:ubiquinol-cytochrome-c reductase activity"/>
    <property type="evidence" value="ECO:0007669"/>
    <property type="project" value="InterPro"/>
</dbReference>
<dbReference type="GO" id="GO:0006122">
    <property type="term" value="P:mitochondrial electron transport, ubiquinol to cytochrome c"/>
    <property type="evidence" value="ECO:0007669"/>
    <property type="project" value="TreeGrafter"/>
</dbReference>
<dbReference type="CDD" id="cd00290">
    <property type="entry name" value="cytochrome_b_C"/>
    <property type="match status" value="1"/>
</dbReference>
<dbReference type="CDD" id="cd00284">
    <property type="entry name" value="Cytochrome_b_N"/>
    <property type="match status" value="1"/>
</dbReference>
<dbReference type="FunFam" id="1.20.810.10:FF:000002">
    <property type="entry name" value="Cytochrome b"/>
    <property type="match status" value="1"/>
</dbReference>
<dbReference type="Gene3D" id="1.20.810.10">
    <property type="entry name" value="Cytochrome Bc1 Complex, Chain C"/>
    <property type="match status" value="1"/>
</dbReference>
<dbReference type="InterPro" id="IPR005798">
    <property type="entry name" value="Cyt_b/b6_C"/>
</dbReference>
<dbReference type="InterPro" id="IPR036150">
    <property type="entry name" value="Cyt_b/b6_C_sf"/>
</dbReference>
<dbReference type="InterPro" id="IPR005797">
    <property type="entry name" value="Cyt_b/b6_N"/>
</dbReference>
<dbReference type="InterPro" id="IPR027387">
    <property type="entry name" value="Cytb/b6-like_sf"/>
</dbReference>
<dbReference type="InterPro" id="IPR030689">
    <property type="entry name" value="Cytochrome_b"/>
</dbReference>
<dbReference type="InterPro" id="IPR048260">
    <property type="entry name" value="Cytochrome_b_C_euk/bac"/>
</dbReference>
<dbReference type="InterPro" id="IPR048259">
    <property type="entry name" value="Cytochrome_b_N_euk/bac"/>
</dbReference>
<dbReference type="InterPro" id="IPR016174">
    <property type="entry name" value="Di-haem_cyt_TM"/>
</dbReference>
<dbReference type="PANTHER" id="PTHR19271">
    <property type="entry name" value="CYTOCHROME B"/>
    <property type="match status" value="1"/>
</dbReference>
<dbReference type="PANTHER" id="PTHR19271:SF16">
    <property type="entry name" value="CYTOCHROME B"/>
    <property type="match status" value="1"/>
</dbReference>
<dbReference type="Pfam" id="PF00032">
    <property type="entry name" value="Cytochrom_B_C"/>
    <property type="match status" value="1"/>
</dbReference>
<dbReference type="Pfam" id="PF00033">
    <property type="entry name" value="Cytochrome_B"/>
    <property type="match status" value="1"/>
</dbReference>
<dbReference type="PIRSF" id="PIRSF038885">
    <property type="entry name" value="COB"/>
    <property type="match status" value="1"/>
</dbReference>
<dbReference type="SUPFAM" id="SSF81648">
    <property type="entry name" value="a domain/subunit of cytochrome bc1 complex (Ubiquinol-cytochrome c reductase)"/>
    <property type="match status" value="1"/>
</dbReference>
<dbReference type="SUPFAM" id="SSF81342">
    <property type="entry name" value="Transmembrane di-heme cytochromes"/>
    <property type="match status" value="1"/>
</dbReference>
<dbReference type="PROSITE" id="PS51003">
    <property type="entry name" value="CYTB_CTER"/>
    <property type="match status" value="1"/>
</dbReference>
<dbReference type="PROSITE" id="PS51002">
    <property type="entry name" value="CYTB_NTER"/>
    <property type="match status" value="1"/>
</dbReference>
<organism>
    <name type="scientific">Oryx leucoryx</name>
    <name type="common">Arabian oryx</name>
    <dbReference type="NCBI Taxonomy" id="39411"/>
    <lineage>
        <taxon>Eukaryota</taxon>
        <taxon>Metazoa</taxon>
        <taxon>Chordata</taxon>
        <taxon>Craniata</taxon>
        <taxon>Vertebrata</taxon>
        <taxon>Euteleostomi</taxon>
        <taxon>Mammalia</taxon>
        <taxon>Eutheria</taxon>
        <taxon>Laurasiatheria</taxon>
        <taxon>Artiodactyla</taxon>
        <taxon>Ruminantia</taxon>
        <taxon>Pecora</taxon>
        <taxon>Bovidae</taxon>
        <taxon>Hippotraginae</taxon>
        <taxon>Oryx</taxon>
    </lineage>
</organism>
<evidence type="ECO:0000250" key="1"/>
<evidence type="ECO:0000250" key="2">
    <source>
        <dbReference type="UniProtKB" id="P00157"/>
    </source>
</evidence>
<evidence type="ECO:0000255" key="3">
    <source>
        <dbReference type="PROSITE-ProRule" id="PRU00967"/>
    </source>
</evidence>
<evidence type="ECO:0000255" key="4">
    <source>
        <dbReference type="PROSITE-ProRule" id="PRU00968"/>
    </source>
</evidence>
<geneLocation type="mitochondrion"/>
<protein>
    <recommendedName>
        <fullName>Cytochrome b</fullName>
    </recommendedName>
    <alternativeName>
        <fullName>Complex III subunit 3</fullName>
    </alternativeName>
    <alternativeName>
        <fullName>Complex III subunit III</fullName>
    </alternativeName>
    <alternativeName>
        <fullName>Cytochrome b-c1 complex subunit 3</fullName>
    </alternativeName>
    <alternativeName>
        <fullName>Ubiquinol-cytochrome-c reductase complex cytochrome b subunit</fullName>
    </alternativeName>
</protein>
<keyword id="KW-0249">Electron transport</keyword>
<keyword id="KW-0349">Heme</keyword>
<keyword id="KW-0408">Iron</keyword>
<keyword id="KW-0472">Membrane</keyword>
<keyword id="KW-0479">Metal-binding</keyword>
<keyword id="KW-0496">Mitochondrion</keyword>
<keyword id="KW-0999">Mitochondrion inner membrane</keyword>
<keyword id="KW-0679">Respiratory chain</keyword>
<keyword id="KW-0812">Transmembrane</keyword>
<keyword id="KW-1133">Transmembrane helix</keyword>
<keyword id="KW-0813">Transport</keyword>
<keyword id="KW-0830">Ubiquinone</keyword>
<comment type="function">
    <text evidence="2">Component of the ubiquinol-cytochrome c reductase complex (complex III or cytochrome b-c1 complex) that is part of the mitochondrial respiratory chain. The b-c1 complex mediates electron transfer from ubiquinol to cytochrome c. Contributes to the generation of a proton gradient across the mitochondrial membrane that is then used for ATP synthesis.</text>
</comment>
<comment type="cofactor">
    <cofactor evidence="2">
        <name>heme b</name>
        <dbReference type="ChEBI" id="CHEBI:60344"/>
    </cofactor>
    <text evidence="2">Binds 2 heme b groups non-covalently.</text>
</comment>
<comment type="subunit">
    <text evidence="2">The cytochrome bc1 complex contains 11 subunits: 3 respiratory subunits (MT-CYB, CYC1 and UQCRFS1), 2 core proteins (UQCRC1 and UQCRC2) and 6 low-molecular weight proteins (UQCRH/QCR6, UQCRB/QCR7, UQCRQ/QCR8, UQCR10/QCR9, UQCR11/QCR10 and a cleavage product of UQCRFS1). This cytochrome bc1 complex then forms a dimer.</text>
</comment>
<comment type="subcellular location">
    <subcellularLocation>
        <location evidence="2">Mitochondrion inner membrane</location>
        <topology evidence="2">Multi-pass membrane protein</topology>
    </subcellularLocation>
</comment>
<comment type="miscellaneous">
    <text evidence="1">Heme 1 (or BL or b562) is low-potential and absorbs at about 562 nm, and heme 2 (or BH or b566) is high-potential and absorbs at about 566 nm.</text>
</comment>
<comment type="similarity">
    <text evidence="3 4">Belongs to the cytochrome b family.</text>
</comment>
<comment type="caution">
    <text evidence="2">The full-length protein contains only eight transmembrane helices, not nine as predicted by bioinformatics tools.</text>
</comment>
<reference key="1">
    <citation type="journal article" date="1999" name="Mol. Phylogenet. Evol.">
        <title>The tribal radiation of the family Bovidae (Artiodactyla) and the evolution of the mitochondrial cytochrome b gene.</title>
        <authorList>
            <person name="Hassanin A."/>
            <person name="Douzery E.J.P."/>
        </authorList>
    </citation>
    <scope>NUCLEOTIDE SEQUENCE [GENOMIC DNA]</scope>
</reference>
<feature type="chain" id="PRO_0000061327" description="Cytochrome b">
    <location>
        <begin position="1"/>
        <end position="379"/>
    </location>
</feature>
<feature type="transmembrane region" description="Helical" evidence="2">
    <location>
        <begin position="33"/>
        <end position="53"/>
    </location>
</feature>
<feature type="transmembrane region" description="Helical" evidence="2">
    <location>
        <begin position="77"/>
        <end position="98"/>
    </location>
</feature>
<feature type="transmembrane region" description="Helical" evidence="2">
    <location>
        <begin position="113"/>
        <end position="133"/>
    </location>
</feature>
<feature type="transmembrane region" description="Helical" evidence="2">
    <location>
        <begin position="178"/>
        <end position="198"/>
    </location>
</feature>
<feature type="transmembrane region" description="Helical" evidence="2">
    <location>
        <begin position="226"/>
        <end position="246"/>
    </location>
</feature>
<feature type="transmembrane region" description="Helical" evidence="2">
    <location>
        <begin position="288"/>
        <end position="308"/>
    </location>
</feature>
<feature type="transmembrane region" description="Helical" evidence="2">
    <location>
        <begin position="320"/>
        <end position="340"/>
    </location>
</feature>
<feature type="transmembrane region" description="Helical" evidence="2">
    <location>
        <begin position="347"/>
        <end position="367"/>
    </location>
</feature>
<feature type="binding site" description="axial binding residue" evidence="2">
    <location>
        <position position="83"/>
    </location>
    <ligand>
        <name>heme b</name>
        <dbReference type="ChEBI" id="CHEBI:60344"/>
        <label>b562</label>
    </ligand>
    <ligandPart>
        <name>Fe</name>
        <dbReference type="ChEBI" id="CHEBI:18248"/>
    </ligandPart>
</feature>
<feature type="binding site" description="axial binding residue" evidence="2">
    <location>
        <position position="97"/>
    </location>
    <ligand>
        <name>heme b</name>
        <dbReference type="ChEBI" id="CHEBI:60344"/>
        <label>b566</label>
    </ligand>
    <ligandPart>
        <name>Fe</name>
        <dbReference type="ChEBI" id="CHEBI:18248"/>
    </ligandPart>
</feature>
<feature type="binding site" description="axial binding residue" evidence="2">
    <location>
        <position position="182"/>
    </location>
    <ligand>
        <name>heme b</name>
        <dbReference type="ChEBI" id="CHEBI:60344"/>
        <label>b562</label>
    </ligand>
    <ligandPart>
        <name>Fe</name>
        <dbReference type="ChEBI" id="CHEBI:18248"/>
    </ligandPart>
</feature>
<feature type="binding site" description="axial binding residue" evidence="2">
    <location>
        <position position="196"/>
    </location>
    <ligand>
        <name>heme b</name>
        <dbReference type="ChEBI" id="CHEBI:60344"/>
        <label>b566</label>
    </ligand>
    <ligandPart>
        <name>Fe</name>
        <dbReference type="ChEBI" id="CHEBI:18248"/>
    </ligandPart>
</feature>
<feature type="binding site" evidence="2">
    <location>
        <position position="201"/>
    </location>
    <ligand>
        <name>a ubiquinone</name>
        <dbReference type="ChEBI" id="CHEBI:16389"/>
    </ligand>
</feature>
<proteinExistence type="inferred from homology"/>
<name>CYB_ORYLE</name>
<sequence>MTNIRKTHPLMKIVNNAFIDLPAPSNISSWWNFGSLLGICLILQILTGLFLAMHYTSDTTTAFSSVTHICRDVNYGWIIRYMHANGASMFFICLFMHVGRGLYYGSYTFLETWNVGVILLFATMATAFMGYVLPWGQMSFWGATVITNLLSAIPYIGTNLVEWIWGGFSVDKATLTRFFAFHFILPFIIAALAMVHLLFLHETGSNNPTGITSDTDKIPFHPYYTIKDILGALLLILVLMLLVLFAPDLLGDPDNYTPANPLNTPPHIKPEWYFLFAYAILRSIPNKLGGVLALVLSILILVLVPALHMSKQRSMMFRPISQCIFWILVADLLTLTWIGGQPVEHPYIIIGQLASIMYFLLILVLMPVASVIENNFLKW</sequence>